<organism>
    <name type="scientific">Dictyostelium discoideum</name>
    <name type="common">Social amoeba</name>
    <dbReference type="NCBI Taxonomy" id="44689"/>
    <lineage>
        <taxon>Eukaryota</taxon>
        <taxon>Amoebozoa</taxon>
        <taxon>Evosea</taxon>
        <taxon>Eumycetozoa</taxon>
        <taxon>Dictyostelia</taxon>
        <taxon>Dictyosteliales</taxon>
        <taxon>Dictyosteliaceae</taxon>
        <taxon>Dictyostelium</taxon>
    </lineage>
</organism>
<evidence type="ECO:0000250" key="1"/>
<evidence type="ECO:0000255" key="2"/>
<evidence type="ECO:0000255" key="3">
    <source>
        <dbReference type="PROSITE-ProRule" id="PRU10039"/>
    </source>
</evidence>
<evidence type="ECO:0000269" key="4">
    <source>
    </source>
</evidence>
<evidence type="ECO:0000305" key="5"/>
<sequence>MNKIIILLIILLSFDIISAAKKFGRKGIRTLGDNEVLLSDGAIRGTVTDTHRVFYGIPFARPPIDELRYEDPQPPKPWSYVRDGTKQRDQCIQDCKLGKGSCSEVGTSEDCLYLDVFIPRTVNPGSKVPVMVFIPGGAFTQGTGSCPLYDGLKFANSSVIVVNVNYRLGVLGFLCTGLLSGNFGFLDQVMALDWVQENIEVFGGDKNQVTIYGESAGAFSVAAHLSSEKSEGKFHRAILSSTPYTVGLKSQTVARGFAGRFSSKIGCDLEDIDCHRSKSPEEILAIQKELGLAIGDKILDAFTIWSPVVDGINVNEQPLTMIKQGTTHDVPTIIGDNQDEAILFVYMTYKNVVIPSSYRTMVHVLFGIANGNKVLEHYPLPGFLKDSRPILSKLLTDYLFRCPGRYHVSKSAQANESPIYHYQYKQVLSGGHSFEACEGLVCHGTELPMVFNTYESALDLDLEEEEEEFAEQLNNYFVNFIKYSNPSHPNGLPTPKVWNPTTKTTNTSLVMKLGFEVKDLITNDPKCDLFDSLSYNGYTKDQNRMRKSKK</sequence>
<name>CRYS_DICDI</name>
<feature type="signal peptide" evidence="4">
    <location>
        <begin position="1"/>
        <end position="19"/>
    </location>
</feature>
<feature type="chain" id="PRO_0000008618" description="Crystal protein">
    <location>
        <begin position="20"/>
        <end position="550"/>
    </location>
</feature>
<feature type="active site" description="Acyl-ester intermediate" evidence="3">
    <location>
        <position position="215"/>
    </location>
</feature>
<feature type="active site" description="Charge relay system" evidence="1">
    <location>
        <position position="340"/>
    </location>
</feature>
<feature type="active site" description="Charge relay system" evidence="1">
    <location>
        <position position="443"/>
    </location>
</feature>
<feature type="glycosylation site" description="N-linked (GlcNAc...) asparagine" evidence="2">
    <location>
        <position position="156"/>
    </location>
</feature>
<feature type="glycosylation site" description="N-linked (GlcNAc...) asparagine" evidence="2">
    <location>
        <position position="506"/>
    </location>
</feature>
<feature type="disulfide bond" evidence="1">
    <location>
        <begin position="91"/>
        <end position="111"/>
    </location>
</feature>
<feature type="disulfide bond" evidence="1">
    <location>
        <begin position="267"/>
        <end position="274"/>
    </location>
</feature>
<dbReference type="EMBL" id="X52464">
    <property type="protein sequence ID" value="CAA36702.1"/>
    <property type="molecule type" value="mRNA"/>
</dbReference>
<dbReference type="EMBL" id="AAFI02000079">
    <property type="protein sequence ID" value="EAL64547.1"/>
    <property type="molecule type" value="Genomic_DNA"/>
</dbReference>
<dbReference type="PIR" id="A34576">
    <property type="entry name" value="A34576"/>
</dbReference>
<dbReference type="RefSeq" id="XP_638123.1">
    <property type="nucleotide sequence ID" value="XM_633031.1"/>
</dbReference>
<dbReference type="SMR" id="P21837"/>
<dbReference type="FunCoup" id="P21837">
    <property type="interactions" value="6"/>
</dbReference>
<dbReference type="STRING" id="44689.P21837"/>
<dbReference type="ESTHER" id="dicdi-crysp">
    <property type="family name" value="Cholinesterase-like"/>
</dbReference>
<dbReference type="GlyCosmos" id="P21837">
    <property type="glycosylation" value="2 sites, No reported glycans"/>
</dbReference>
<dbReference type="GlyGen" id="P21837">
    <property type="glycosylation" value="2 sites"/>
</dbReference>
<dbReference type="PaxDb" id="44689-DDB0191254"/>
<dbReference type="ABCD" id="P21837">
    <property type="antibodies" value="1 sequenced antibody"/>
</dbReference>
<dbReference type="EnsemblProtists" id="EAL64547">
    <property type="protein sequence ID" value="EAL64547"/>
    <property type="gene ID" value="DDB_G0285419"/>
</dbReference>
<dbReference type="GeneID" id="8625172"/>
<dbReference type="KEGG" id="ddi:DDB_G0285419"/>
<dbReference type="dictyBase" id="DDB_G0285419">
    <property type="gene designation" value="cryS"/>
</dbReference>
<dbReference type="VEuPathDB" id="AmoebaDB:DDB_G0285419"/>
<dbReference type="eggNOG" id="KOG1516">
    <property type="taxonomic scope" value="Eukaryota"/>
</dbReference>
<dbReference type="HOGENOM" id="CLU_006586_13_0_1"/>
<dbReference type="InParanoid" id="P21837"/>
<dbReference type="OMA" id="QPREPWN"/>
<dbReference type="PhylomeDB" id="P21837"/>
<dbReference type="Reactome" id="R-DDI-112311">
    <property type="pathway name" value="Neurotransmitter clearance"/>
</dbReference>
<dbReference type="Reactome" id="R-DDI-1483191">
    <property type="pathway name" value="Synthesis of PC"/>
</dbReference>
<dbReference type="Reactome" id="R-DDI-2022377">
    <property type="pathway name" value="Metabolism of Angiotensinogen to Angiotensins"/>
</dbReference>
<dbReference type="Reactome" id="R-DDI-211945">
    <property type="pathway name" value="Phase I - Functionalization of compounds"/>
</dbReference>
<dbReference type="Reactome" id="R-DDI-5578768">
    <property type="pathway name" value="Physiological factors"/>
</dbReference>
<dbReference type="Reactome" id="R-DDI-9749641">
    <property type="pathway name" value="Aspirin ADME"/>
</dbReference>
<dbReference type="PRO" id="PR:P21837"/>
<dbReference type="Proteomes" id="UP000002195">
    <property type="component" value="Chromosome 4"/>
</dbReference>
<dbReference type="GO" id="GO:0032009">
    <property type="term" value="C:early phagosome"/>
    <property type="evidence" value="ECO:0000315"/>
    <property type="project" value="dictyBase"/>
</dbReference>
<dbReference type="GO" id="GO:0033118">
    <property type="term" value="C:esterosome membrane"/>
    <property type="evidence" value="ECO:0007669"/>
    <property type="project" value="UniProtKB-SubCell"/>
</dbReference>
<dbReference type="GO" id="GO:0031012">
    <property type="term" value="C:extracellular matrix"/>
    <property type="evidence" value="ECO:0007005"/>
    <property type="project" value="dictyBase"/>
</dbReference>
<dbReference type="GO" id="GO:0005764">
    <property type="term" value="C:lysosome"/>
    <property type="evidence" value="ECO:0000315"/>
    <property type="project" value="dictyBase"/>
</dbReference>
<dbReference type="GO" id="GO:0052689">
    <property type="term" value="F:carboxylic ester hydrolase activity"/>
    <property type="evidence" value="ECO:0007669"/>
    <property type="project" value="UniProtKB-KW"/>
</dbReference>
<dbReference type="GO" id="GO:0016788">
    <property type="term" value="F:hydrolase activity, acting on ester bonds"/>
    <property type="evidence" value="ECO:0000314"/>
    <property type="project" value="dictyBase"/>
</dbReference>
<dbReference type="GO" id="GO:0006897">
    <property type="term" value="P:endocytosis"/>
    <property type="evidence" value="ECO:0000315"/>
    <property type="project" value="dictyBase"/>
</dbReference>
<dbReference type="GO" id="GO:0000281">
    <property type="term" value="P:mitotic cytokinesis"/>
    <property type="evidence" value="ECO:0000315"/>
    <property type="project" value="dictyBase"/>
</dbReference>
<dbReference type="GO" id="GO:0030587">
    <property type="term" value="P:sorocarp development"/>
    <property type="evidence" value="ECO:0000315"/>
    <property type="project" value="dictyBase"/>
</dbReference>
<dbReference type="CDD" id="cd00312">
    <property type="entry name" value="Esterase_lipase"/>
    <property type="match status" value="1"/>
</dbReference>
<dbReference type="FunFam" id="3.40.50.1820:FF:000293">
    <property type="entry name" value="Carboxylic ester hydrolase"/>
    <property type="match status" value="1"/>
</dbReference>
<dbReference type="Gene3D" id="3.40.50.1820">
    <property type="entry name" value="alpha/beta hydrolase"/>
    <property type="match status" value="1"/>
</dbReference>
<dbReference type="InterPro" id="IPR029058">
    <property type="entry name" value="AB_hydrolase_fold"/>
</dbReference>
<dbReference type="InterPro" id="IPR002018">
    <property type="entry name" value="CarbesteraseB"/>
</dbReference>
<dbReference type="InterPro" id="IPR019826">
    <property type="entry name" value="Carboxylesterase_B_AS"/>
</dbReference>
<dbReference type="InterPro" id="IPR019819">
    <property type="entry name" value="Carboxylesterase_B_CS"/>
</dbReference>
<dbReference type="PANTHER" id="PTHR45570">
    <property type="entry name" value="CARBOXYLIC ESTER HYDROLASE"/>
    <property type="match status" value="1"/>
</dbReference>
<dbReference type="PANTHER" id="PTHR45570:SF1">
    <property type="entry name" value="CARBOXYLIC ESTER HYDROLASE"/>
    <property type="match status" value="1"/>
</dbReference>
<dbReference type="Pfam" id="PF00135">
    <property type="entry name" value="COesterase"/>
    <property type="match status" value="1"/>
</dbReference>
<dbReference type="SUPFAM" id="SSF53474">
    <property type="entry name" value="alpha/beta-Hydrolases"/>
    <property type="match status" value="1"/>
</dbReference>
<dbReference type="PROSITE" id="PS00122">
    <property type="entry name" value="CARBOXYLESTERASE_B_1"/>
    <property type="match status" value="1"/>
</dbReference>
<dbReference type="PROSITE" id="PS00941">
    <property type="entry name" value="CARBOXYLESTERASE_B_2"/>
    <property type="match status" value="1"/>
</dbReference>
<proteinExistence type="evidence at protein level"/>
<protein>
    <recommendedName>
        <fullName>Crystal protein</fullName>
    </recommendedName>
</protein>
<accession>P21837</accession>
<accession>Q54N20</accession>
<gene>
    <name type="primary">cryS</name>
    <name type="ORF">DDB_G0285419</name>
</gene>
<reference key="1">
    <citation type="journal article" date="1990" name="J. Cell Biol.">
        <title>Membrane-enclosed crystals in Dictyostelium discoideum cells, consisting of developmentally regulated proteins with sequence similarities to known esterases.</title>
        <authorList>
            <person name="Bomblies L."/>
            <person name="Biegelmann E."/>
            <person name="Doering V."/>
            <person name="Gerisch G."/>
            <person name="Krafft-Czepa H."/>
            <person name="Noegel A.A."/>
            <person name="Schleicher M."/>
            <person name="Humbel B.M."/>
        </authorList>
    </citation>
    <scope>NUCLEOTIDE SEQUENCE [MRNA]</scope>
    <scope>PROTEIN SEQUENCE OF N-TERMINUS</scope>
    <source>
        <strain>AX2</strain>
        <strain>AX3</strain>
    </source>
</reference>
<reference key="2">
    <citation type="journal article" date="2005" name="Nature">
        <title>The genome of the social amoeba Dictyostelium discoideum.</title>
        <authorList>
            <person name="Eichinger L."/>
            <person name="Pachebat J.A."/>
            <person name="Gloeckner G."/>
            <person name="Rajandream M.A."/>
            <person name="Sucgang R."/>
            <person name="Berriman M."/>
            <person name="Song J."/>
            <person name="Olsen R."/>
            <person name="Szafranski K."/>
            <person name="Xu Q."/>
            <person name="Tunggal B."/>
            <person name="Kummerfeld S."/>
            <person name="Madera M."/>
            <person name="Konfortov B.A."/>
            <person name="Rivero F."/>
            <person name="Bankier A.T."/>
            <person name="Lehmann R."/>
            <person name="Hamlin N."/>
            <person name="Davies R."/>
            <person name="Gaudet P."/>
            <person name="Fey P."/>
            <person name="Pilcher K."/>
            <person name="Chen G."/>
            <person name="Saunders D."/>
            <person name="Sodergren E.J."/>
            <person name="Davis P."/>
            <person name="Kerhornou A."/>
            <person name="Nie X."/>
            <person name="Hall N."/>
            <person name="Anjard C."/>
            <person name="Hemphill L."/>
            <person name="Bason N."/>
            <person name="Farbrother P."/>
            <person name="Desany B."/>
            <person name="Just E."/>
            <person name="Morio T."/>
            <person name="Rost R."/>
            <person name="Churcher C.M."/>
            <person name="Cooper J."/>
            <person name="Haydock S."/>
            <person name="van Driessche N."/>
            <person name="Cronin A."/>
            <person name="Goodhead I."/>
            <person name="Muzny D.M."/>
            <person name="Mourier T."/>
            <person name="Pain A."/>
            <person name="Lu M."/>
            <person name="Harper D."/>
            <person name="Lindsay R."/>
            <person name="Hauser H."/>
            <person name="James K.D."/>
            <person name="Quiles M."/>
            <person name="Madan Babu M."/>
            <person name="Saito T."/>
            <person name="Buchrieser C."/>
            <person name="Wardroper A."/>
            <person name="Felder M."/>
            <person name="Thangavelu M."/>
            <person name="Johnson D."/>
            <person name="Knights A."/>
            <person name="Loulseged H."/>
            <person name="Mungall K.L."/>
            <person name="Oliver K."/>
            <person name="Price C."/>
            <person name="Quail M.A."/>
            <person name="Urushihara H."/>
            <person name="Hernandez J."/>
            <person name="Rabbinowitsch E."/>
            <person name="Steffen D."/>
            <person name="Sanders M."/>
            <person name="Ma J."/>
            <person name="Kohara Y."/>
            <person name="Sharp S."/>
            <person name="Simmonds M.N."/>
            <person name="Spiegler S."/>
            <person name="Tivey A."/>
            <person name="Sugano S."/>
            <person name="White B."/>
            <person name="Walker D."/>
            <person name="Woodward J.R."/>
            <person name="Winckler T."/>
            <person name="Tanaka Y."/>
            <person name="Shaulsky G."/>
            <person name="Schleicher M."/>
            <person name="Weinstock G.M."/>
            <person name="Rosenthal A."/>
            <person name="Cox E.C."/>
            <person name="Chisholm R.L."/>
            <person name="Gibbs R.A."/>
            <person name="Loomis W.F."/>
            <person name="Platzer M."/>
            <person name="Kay R.R."/>
            <person name="Williams J.G."/>
            <person name="Dear P.H."/>
            <person name="Noegel A.A."/>
            <person name="Barrell B.G."/>
            <person name="Kuspa A."/>
        </authorList>
    </citation>
    <scope>NUCLEOTIDE SEQUENCE [LARGE SCALE GENOMIC DNA]</scope>
    <source>
        <strain>AX4</strain>
    </source>
</reference>
<comment type="subcellular location">
    <subcellularLocation>
        <location>Cytoplasmic vesicle</location>
        <location>Esterosome membrane</location>
    </subcellularLocation>
    <text>Membrane-enclosed crystals (esterosome).</text>
</comment>
<comment type="developmental stage">
    <text>Crystals accumulates between growth and aggregation stage and disappear only after the spore germination.</text>
</comment>
<comment type="similarity">
    <text evidence="5">Belongs to the type-B carboxylesterase/lipase family.</text>
</comment>
<keyword id="KW-0968">Cytoplasmic vesicle</keyword>
<keyword id="KW-0903">Direct protein sequencing</keyword>
<keyword id="KW-1015">Disulfide bond</keyword>
<keyword id="KW-0325">Glycoprotein</keyword>
<keyword id="KW-0378">Hydrolase</keyword>
<keyword id="KW-0472">Membrane</keyword>
<keyword id="KW-1185">Reference proteome</keyword>
<keyword id="KW-0719">Serine esterase</keyword>
<keyword id="KW-0732">Signal</keyword>